<accession>Q99V08</accession>
<evidence type="ECO:0000255" key="1">
    <source>
        <dbReference type="HAMAP-Rule" id="MF_01553"/>
    </source>
</evidence>
<evidence type="ECO:0000305" key="2"/>
<dbReference type="EC" id="2.7.7.6" evidence="1"/>
<dbReference type="EMBL" id="BA000018">
    <property type="protein sequence ID" value="BAB42187.1"/>
    <property type="status" value="ALT_INIT"/>
    <property type="molecule type" value="Genomic_DNA"/>
</dbReference>
<dbReference type="PIR" id="H89878">
    <property type="entry name" value="H89878"/>
</dbReference>
<dbReference type="RefSeq" id="WP_000257888.1">
    <property type="nucleotide sequence ID" value="NC_002745.2"/>
</dbReference>
<dbReference type="SMR" id="Q99V08"/>
<dbReference type="EnsemblBacteria" id="BAB42187">
    <property type="protein sequence ID" value="BAB42187"/>
    <property type="gene ID" value="BAB42187"/>
</dbReference>
<dbReference type="KEGG" id="sau:SA0941"/>
<dbReference type="HOGENOM" id="CLU_187518_1_0_9"/>
<dbReference type="GO" id="GO:0000428">
    <property type="term" value="C:DNA-directed RNA polymerase complex"/>
    <property type="evidence" value="ECO:0007669"/>
    <property type="project" value="UniProtKB-KW"/>
</dbReference>
<dbReference type="GO" id="GO:0003677">
    <property type="term" value="F:DNA binding"/>
    <property type="evidence" value="ECO:0007669"/>
    <property type="project" value="UniProtKB-UniRule"/>
</dbReference>
<dbReference type="GO" id="GO:0003899">
    <property type="term" value="F:DNA-directed RNA polymerase activity"/>
    <property type="evidence" value="ECO:0007669"/>
    <property type="project" value="UniProtKB-UniRule"/>
</dbReference>
<dbReference type="GO" id="GO:0006351">
    <property type="term" value="P:DNA-templated transcription"/>
    <property type="evidence" value="ECO:0007669"/>
    <property type="project" value="UniProtKB-UniRule"/>
</dbReference>
<dbReference type="Gene3D" id="3.10.20.730">
    <property type="entry name" value="RNAP, epsilon subunit-like"/>
    <property type="match status" value="1"/>
</dbReference>
<dbReference type="HAMAP" id="MF_01553">
    <property type="entry name" value="RNApol_bact_RpoY"/>
    <property type="match status" value="1"/>
</dbReference>
<dbReference type="InterPro" id="IPR009907">
    <property type="entry name" value="RpoY"/>
</dbReference>
<dbReference type="NCBIfam" id="NF010188">
    <property type="entry name" value="PRK13667.1"/>
    <property type="match status" value="1"/>
</dbReference>
<dbReference type="Pfam" id="PF07288">
    <property type="entry name" value="RpoY"/>
    <property type="match status" value="1"/>
</dbReference>
<sequence length="72" mass="8752">MAVFKVFYQHNRDEVIVRENTQSLYVEAQTEEQVRRYLKDRNFNIEFITKLEGAHLDYEKENSEHFNVEIAK</sequence>
<feature type="chain" id="PRO_0000163138" description="DNA-directed RNA polymerase subunit epsilon">
    <location>
        <begin position="1"/>
        <end position="72"/>
    </location>
</feature>
<name>RPOY_STAAN</name>
<organism>
    <name type="scientific">Staphylococcus aureus (strain N315)</name>
    <dbReference type="NCBI Taxonomy" id="158879"/>
    <lineage>
        <taxon>Bacteria</taxon>
        <taxon>Bacillati</taxon>
        <taxon>Bacillota</taxon>
        <taxon>Bacilli</taxon>
        <taxon>Bacillales</taxon>
        <taxon>Staphylococcaceae</taxon>
        <taxon>Staphylococcus</taxon>
    </lineage>
</organism>
<comment type="function">
    <text evidence="1">A non-essential component of RNA polymerase (RNAP).</text>
</comment>
<comment type="catalytic activity">
    <reaction evidence="1">
        <text>RNA(n) + a ribonucleoside 5'-triphosphate = RNA(n+1) + diphosphate</text>
        <dbReference type="Rhea" id="RHEA:21248"/>
        <dbReference type="Rhea" id="RHEA-COMP:14527"/>
        <dbReference type="Rhea" id="RHEA-COMP:17342"/>
        <dbReference type="ChEBI" id="CHEBI:33019"/>
        <dbReference type="ChEBI" id="CHEBI:61557"/>
        <dbReference type="ChEBI" id="CHEBI:140395"/>
        <dbReference type="EC" id="2.7.7.6"/>
    </reaction>
</comment>
<comment type="subunit">
    <text evidence="1">RNAP is composed of a core of 2 alpha, a beta and a beta' subunit. The core is associated with a delta subunit, and at least one of epsilon or omega. When a sigma factor is associated with the core the holoenzyme is formed, which can initiate transcription.</text>
</comment>
<comment type="similarity">
    <text evidence="1">Belongs to the RNA polymerase subunit epsilon family.</text>
</comment>
<comment type="sequence caution" evidence="2">
    <conflict type="erroneous initiation">
        <sequence resource="EMBL-CDS" id="BAB42187"/>
    </conflict>
    <text>Truncated N-terminus.</text>
</comment>
<keyword id="KW-0240">DNA-directed RNA polymerase</keyword>
<keyword id="KW-0548">Nucleotidyltransferase</keyword>
<keyword id="KW-0804">Transcription</keyword>
<keyword id="KW-0808">Transferase</keyword>
<gene>
    <name evidence="1" type="primary">rpoY</name>
    <name type="ordered locus">SA0941</name>
</gene>
<protein>
    <recommendedName>
        <fullName evidence="1">DNA-directed RNA polymerase subunit epsilon</fullName>
        <shortName evidence="1">RNAP epsilon subunit</shortName>
        <ecNumber evidence="1">2.7.7.6</ecNumber>
    </recommendedName>
    <alternativeName>
        <fullName evidence="1">RNA polymerase epsilon subunit</fullName>
    </alternativeName>
    <alternativeName>
        <fullName evidence="1">Transcriptase subunit epsilon</fullName>
    </alternativeName>
</protein>
<proteinExistence type="inferred from homology"/>
<reference key="1">
    <citation type="journal article" date="2001" name="Lancet">
        <title>Whole genome sequencing of meticillin-resistant Staphylococcus aureus.</title>
        <authorList>
            <person name="Kuroda M."/>
            <person name="Ohta T."/>
            <person name="Uchiyama I."/>
            <person name="Baba T."/>
            <person name="Yuzawa H."/>
            <person name="Kobayashi I."/>
            <person name="Cui L."/>
            <person name="Oguchi A."/>
            <person name="Aoki K."/>
            <person name="Nagai Y."/>
            <person name="Lian J.-Q."/>
            <person name="Ito T."/>
            <person name="Kanamori M."/>
            <person name="Matsumaru H."/>
            <person name="Maruyama A."/>
            <person name="Murakami H."/>
            <person name="Hosoyama A."/>
            <person name="Mizutani-Ui Y."/>
            <person name="Takahashi N.K."/>
            <person name="Sawano T."/>
            <person name="Inoue R."/>
            <person name="Kaito C."/>
            <person name="Sekimizu K."/>
            <person name="Hirakawa H."/>
            <person name="Kuhara S."/>
            <person name="Goto S."/>
            <person name="Yabuzaki J."/>
            <person name="Kanehisa M."/>
            <person name="Yamashita A."/>
            <person name="Oshima K."/>
            <person name="Furuya K."/>
            <person name="Yoshino C."/>
            <person name="Shiba T."/>
            <person name="Hattori M."/>
            <person name="Ogasawara N."/>
            <person name="Hayashi H."/>
            <person name="Hiramatsu K."/>
        </authorList>
    </citation>
    <scope>NUCLEOTIDE SEQUENCE [LARGE SCALE GENOMIC DNA]</scope>
    <source>
        <strain>N315</strain>
    </source>
</reference>